<protein>
    <recommendedName>
        <fullName>Putative uncharacterized protein YGR291C</fullName>
    </recommendedName>
</protein>
<accession>P53340</accession>
<dbReference type="EMBL" id="Z73076">
    <property type="protein sequence ID" value="CAA97324.1"/>
    <property type="molecule type" value="Genomic_DNA"/>
</dbReference>
<dbReference type="PIR" id="S64626">
    <property type="entry name" value="S64626"/>
</dbReference>
<dbReference type="DIP" id="DIP-3863N"/>
<dbReference type="STRING" id="4932.YGR291C"/>
<dbReference type="PaxDb" id="4932-YGR291C"/>
<dbReference type="EnsemblFungi" id="YGR291C_mRNA">
    <property type="protein sequence ID" value="YGR291C"/>
    <property type="gene ID" value="YGR291C"/>
</dbReference>
<dbReference type="AGR" id="SGD:S000003523"/>
<dbReference type="SGD" id="S000003523">
    <property type="gene designation" value="YGR291C"/>
</dbReference>
<dbReference type="GeneTree" id="ENSGT01000000222129"/>
<dbReference type="HOGENOM" id="CLU_2706255_0_0_1"/>
<evidence type="ECO:0000305" key="1">
    <source>
    </source>
</evidence>
<sequence>MELFIPCPERLKKMMLQEELRKELFILRCLYHPTIQIMLPTLGTLGTKKRKEKYALSLFEPILNCVGSAKISG</sequence>
<reference key="1">
    <citation type="journal article" date="1997" name="Yeast">
        <title>Sequence analysis of a near-subtelomeric 35.4 kb DNA segment on the right arm of chromosome VII from Saccharomyces cerevisiae carrying the MAL1 locus reveals 15 complete open reading frames, including ZUO1, BGL2 and BIO2 genes and an ABC transporter gene.</title>
        <authorList>
            <person name="Volckaert G."/>
            <person name="Voet M."/>
            <person name="Robben J."/>
        </authorList>
    </citation>
    <scope>NUCLEOTIDE SEQUENCE [GENOMIC DNA]</scope>
    <source>
        <strain>ATCC 96604 / S288c / FY1679</strain>
    </source>
</reference>
<reference key="2">
    <citation type="journal article" date="1997" name="Nature">
        <title>The nucleotide sequence of Saccharomyces cerevisiae chromosome VII.</title>
        <authorList>
            <person name="Tettelin H."/>
            <person name="Agostoni-Carbone M.L."/>
            <person name="Albermann K."/>
            <person name="Albers M."/>
            <person name="Arroyo J."/>
            <person name="Backes U."/>
            <person name="Barreiros T."/>
            <person name="Bertani I."/>
            <person name="Bjourson A.J."/>
            <person name="Brueckner M."/>
            <person name="Bruschi C.V."/>
            <person name="Carignani G."/>
            <person name="Castagnoli L."/>
            <person name="Cerdan E."/>
            <person name="Clemente M.L."/>
            <person name="Coblenz A."/>
            <person name="Coglievina M."/>
            <person name="Coissac E."/>
            <person name="Defoor E."/>
            <person name="Del Bino S."/>
            <person name="Delius H."/>
            <person name="Delneri D."/>
            <person name="de Wergifosse P."/>
            <person name="Dujon B."/>
            <person name="Durand P."/>
            <person name="Entian K.-D."/>
            <person name="Eraso P."/>
            <person name="Escribano V."/>
            <person name="Fabiani L."/>
            <person name="Fartmann B."/>
            <person name="Feroli F."/>
            <person name="Feuermann M."/>
            <person name="Frontali L."/>
            <person name="Garcia-Gonzalez M."/>
            <person name="Garcia-Saez M.I."/>
            <person name="Goffeau A."/>
            <person name="Guerreiro P."/>
            <person name="Hani J."/>
            <person name="Hansen M."/>
            <person name="Hebling U."/>
            <person name="Hernandez K."/>
            <person name="Heumann K."/>
            <person name="Hilger F."/>
            <person name="Hofmann B."/>
            <person name="Indge K.J."/>
            <person name="James C.M."/>
            <person name="Klima R."/>
            <person name="Koetter P."/>
            <person name="Kramer B."/>
            <person name="Kramer W."/>
            <person name="Lauquin G."/>
            <person name="Leuther H."/>
            <person name="Louis E.J."/>
            <person name="Maillier E."/>
            <person name="Marconi A."/>
            <person name="Martegani E."/>
            <person name="Mazon M.J."/>
            <person name="Mazzoni C."/>
            <person name="McReynolds A.D.K."/>
            <person name="Melchioretto P."/>
            <person name="Mewes H.-W."/>
            <person name="Minenkova O."/>
            <person name="Mueller-Auer S."/>
            <person name="Nawrocki A."/>
            <person name="Netter P."/>
            <person name="Neu R."/>
            <person name="Nombela C."/>
            <person name="Oliver S.G."/>
            <person name="Panzeri L."/>
            <person name="Paoluzi S."/>
            <person name="Plevani P."/>
            <person name="Portetelle D."/>
            <person name="Portillo F."/>
            <person name="Potier S."/>
            <person name="Purnelle B."/>
            <person name="Rieger M."/>
            <person name="Riles L."/>
            <person name="Rinaldi T."/>
            <person name="Robben J."/>
            <person name="Rodrigues-Pousada C."/>
            <person name="Rodriguez-Belmonte E."/>
            <person name="Rodriguez-Torres A.M."/>
            <person name="Rose M."/>
            <person name="Ruzzi M."/>
            <person name="Saliola M."/>
            <person name="Sanchez-Perez M."/>
            <person name="Schaefer B."/>
            <person name="Schaefer M."/>
            <person name="Scharfe M."/>
            <person name="Schmidheini T."/>
            <person name="Schreer A."/>
            <person name="Skala J."/>
            <person name="Souciet J.-L."/>
            <person name="Steensma H.Y."/>
            <person name="Talla E."/>
            <person name="Thierry A."/>
            <person name="Vandenbol M."/>
            <person name="van der Aart Q.J.M."/>
            <person name="Van Dyck L."/>
            <person name="Vanoni M."/>
            <person name="Verhasselt P."/>
            <person name="Voet M."/>
            <person name="Volckaert G."/>
            <person name="Wambutt R."/>
            <person name="Watson M.D."/>
            <person name="Weber N."/>
            <person name="Wedler E."/>
            <person name="Wedler H."/>
            <person name="Wipfli P."/>
            <person name="Wolf K."/>
            <person name="Wright L.F."/>
            <person name="Zaccaria P."/>
            <person name="Zimmermann M."/>
            <person name="Zollner A."/>
            <person name="Kleine K."/>
        </authorList>
    </citation>
    <scope>NUCLEOTIDE SEQUENCE [LARGE SCALE GENOMIC DNA]</scope>
    <source>
        <strain>ATCC 204508 / S288c</strain>
    </source>
</reference>
<reference key="3">
    <citation type="journal article" date="2014" name="G3 (Bethesda)">
        <title>The reference genome sequence of Saccharomyces cerevisiae: Then and now.</title>
        <authorList>
            <person name="Engel S.R."/>
            <person name="Dietrich F.S."/>
            <person name="Fisk D.G."/>
            <person name="Binkley G."/>
            <person name="Balakrishnan R."/>
            <person name="Costanzo M.C."/>
            <person name="Dwight S.S."/>
            <person name="Hitz B.C."/>
            <person name="Karra K."/>
            <person name="Nash R.S."/>
            <person name="Weng S."/>
            <person name="Wong E.D."/>
            <person name="Lloyd P."/>
            <person name="Skrzypek M.S."/>
            <person name="Miyasato S.R."/>
            <person name="Simison M."/>
            <person name="Cherry J.M."/>
        </authorList>
    </citation>
    <scope>GENOME REANNOTATION</scope>
    <source>
        <strain>ATCC 204508 / S288c</strain>
    </source>
</reference>
<name>YG62_YEAST</name>
<gene>
    <name type="ordered locus">YGR291C</name>
</gene>
<comment type="caution">
    <text evidence="1">Product of a dubious gene prediction unlikely to encode a functional protein. Because of that it is not part of the S.cerevisiae S288c complete/reference proteome set.</text>
</comment>
<proteinExistence type="uncertain"/>
<organism>
    <name type="scientific">Saccharomyces cerevisiae (strain ATCC 204508 / S288c)</name>
    <name type="common">Baker's yeast</name>
    <dbReference type="NCBI Taxonomy" id="559292"/>
    <lineage>
        <taxon>Eukaryota</taxon>
        <taxon>Fungi</taxon>
        <taxon>Dikarya</taxon>
        <taxon>Ascomycota</taxon>
        <taxon>Saccharomycotina</taxon>
        <taxon>Saccharomycetes</taxon>
        <taxon>Saccharomycetales</taxon>
        <taxon>Saccharomycetaceae</taxon>
        <taxon>Saccharomyces</taxon>
    </lineage>
</organism>
<feature type="chain" id="PRO_0000202873" description="Putative uncharacterized protein YGR291C">
    <location>
        <begin position="1"/>
        <end position="73"/>
    </location>
</feature>